<name>TCTP_RABIT</name>
<dbReference type="EMBL" id="Z46805">
    <property type="protein sequence ID" value="CAA86826.1"/>
    <property type="molecule type" value="mRNA"/>
</dbReference>
<dbReference type="EMBL" id="AJ225898">
    <property type="protein sequence ID" value="CAA12650.1"/>
    <property type="molecule type" value="Genomic_DNA"/>
</dbReference>
<dbReference type="EMBL" id="AJ131951">
    <property type="protein sequence ID" value="CAB41990.1"/>
    <property type="molecule type" value="mRNA"/>
</dbReference>
<dbReference type="EMBL" id="AJ277092">
    <property type="protein sequence ID" value="CAC01239.1"/>
    <property type="molecule type" value="mRNA"/>
</dbReference>
<dbReference type="EMBL" id="AJ277093">
    <property type="protein sequence ID" value="CAC01240.1"/>
    <property type="molecule type" value="mRNA"/>
</dbReference>
<dbReference type="PIR" id="A38956">
    <property type="entry name" value="A38956"/>
</dbReference>
<dbReference type="RefSeq" id="XP_002718363.1">
    <property type="nucleotide sequence ID" value="XM_002718317.3"/>
</dbReference>
<dbReference type="RefSeq" id="XP_069904898.1">
    <property type="nucleotide sequence ID" value="XM_070048797.1"/>
</dbReference>
<dbReference type="BMRB" id="P43348"/>
<dbReference type="SMR" id="P43348"/>
<dbReference type="FunCoup" id="P43348">
    <property type="interactions" value="1482"/>
</dbReference>
<dbReference type="STRING" id="9986.ENSOCUP00000018089"/>
<dbReference type="PaxDb" id="9986-ENSOCUP00000018089"/>
<dbReference type="Ensembl" id="ENSOCUT00000023699.1">
    <property type="protein sequence ID" value="ENSOCUP00000037603.1"/>
    <property type="gene ID" value="ENSOCUG00000024148.1"/>
</dbReference>
<dbReference type="Ensembl" id="ENSOCUT00000042080.1">
    <property type="protein sequence ID" value="ENSOCUP00000033026.1"/>
    <property type="gene ID" value="ENSOCUG00000023692.2"/>
</dbReference>
<dbReference type="GeneID" id="100343809"/>
<dbReference type="GeneID" id="100353956"/>
<dbReference type="KEGG" id="ocu:100008854"/>
<dbReference type="KEGG" id="ocu:100344007"/>
<dbReference type="KEGG" id="ocu:100353956"/>
<dbReference type="KEGG" id="ocu:100357892"/>
<dbReference type="eggNOG" id="KOG1727">
    <property type="taxonomic scope" value="Eukaryota"/>
</dbReference>
<dbReference type="GeneTree" id="ENSGT00390000006051"/>
<dbReference type="HOGENOM" id="CLU_095877_0_1_1"/>
<dbReference type="InParanoid" id="P43348"/>
<dbReference type="OrthoDB" id="5988874at2759"/>
<dbReference type="TreeFam" id="TF300238"/>
<dbReference type="Proteomes" id="UP000001811">
    <property type="component" value="Chromosome 8"/>
</dbReference>
<dbReference type="Proteomes" id="UP000001811">
    <property type="component" value="Chromosome X"/>
</dbReference>
<dbReference type="Bgee" id="ENSOCUG00000023692">
    <property type="expression patterns" value="Expressed in blood and 14 other cell types or tissues"/>
</dbReference>
<dbReference type="GO" id="GO:0005737">
    <property type="term" value="C:cytoplasm"/>
    <property type="evidence" value="ECO:0007669"/>
    <property type="project" value="UniProtKB-SubCell"/>
</dbReference>
<dbReference type="GO" id="GO:0000922">
    <property type="term" value="C:spindle pole"/>
    <property type="evidence" value="ECO:0000250"/>
    <property type="project" value="UniProtKB"/>
</dbReference>
<dbReference type="GO" id="GO:0005509">
    <property type="term" value="F:calcium ion binding"/>
    <property type="evidence" value="ECO:0007669"/>
    <property type="project" value="TreeGrafter"/>
</dbReference>
<dbReference type="FunFam" id="2.170.150.10:FF:000001">
    <property type="entry name" value="Tumor protein, translationally-controlled 1"/>
    <property type="match status" value="1"/>
</dbReference>
<dbReference type="Gene3D" id="2.170.150.10">
    <property type="entry name" value="Metal Binding Protein, Guanine Nucleotide Exchange Factor, Chain A"/>
    <property type="match status" value="1"/>
</dbReference>
<dbReference type="InterPro" id="IPR011057">
    <property type="entry name" value="Mss4-like_sf"/>
</dbReference>
<dbReference type="InterPro" id="IPR011323">
    <property type="entry name" value="Mss4/transl-control_tumour"/>
</dbReference>
<dbReference type="InterPro" id="IPR034737">
    <property type="entry name" value="TCTP"/>
</dbReference>
<dbReference type="InterPro" id="IPR018103">
    <property type="entry name" value="Translation_control_tumour_CS"/>
</dbReference>
<dbReference type="InterPro" id="IPR018105">
    <property type="entry name" value="Translational_control_tumour_p"/>
</dbReference>
<dbReference type="PANTHER" id="PTHR11991">
    <property type="entry name" value="TRANSLATIONALLY CONTROLLED TUMOR PROTEIN-RELATED"/>
    <property type="match status" value="1"/>
</dbReference>
<dbReference type="PANTHER" id="PTHR11991:SF0">
    <property type="entry name" value="TRANSLATIONALLY-CONTROLLED TUMOR PROTEIN"/>
    <property type="match status" value="1"/>
</dbReference>
<dbReference type="Pfam" id="PF00838">
    <property type="entry name" value="TCTP"/>
    <property type="match status" value="1"/>
</dbReference>
<dbReference type="PRINTS" id="PR01653">
    <property type="entry name" value="TCTPROTEIN"/>
</dbReference>
<dbReference type="SUPFAM" id="SSF51316">
    <property type="entry name" value="Mss4-like"/>
    <property type="match status" value="1"/>
</dbReference>
<dbReference type="PROSITE" id="PS01002">
    <property type="entry name" value="TCTP_1"/>
    <property type="match status" value="1"/>
</dbReference>
<dbReference type="PROSITE" id="PS01003">
    <property type="entry name" value="TCTP_2"/>
    <property type="match status" value="1"/>
</dbReference>
<dbReference type="PROSITE" id="PS51797">
    <property type="entry name" value="TCTP_3"/>
    <property type="match status" value="1"/>
</dbReference>
<sequence>MIIYRDLISHDEMFSDIYKIREIAGGLCLEVEGKMVSRTEGNIDDSLIGGNASAEGPEGEGTESTVITGVDIVMNHHLQETSFTKEAYKKYIKDYMKSIKGKLEEQRPERVKPFMTGAAEQIKHILANFKNYQFYIGENMNPDGMVALLDYREDGVTPFMIFFKDGLEMEKC</sequence>
<proteinExistence type="evidence at transcript level"/>
<evidence type="ECO:0000250" key="1">
    <source>
        <dbReference type="UniProtKB" id="P13693"/>
    </source>
</evidence>
<evidence type="ECO:0000250" key="2">
    <source>
        <dbReference type="UniProtKB" id="P63029"/>
    </source>
</evidence>
<evidence type="ECO:0000255" key="3">
    <source>
        <dbReference type="PROSITE-ProRule" id="PRU01133"/>
    </source>
</evidence>
<evidence type="ECO:0000305" key="4"/>
<organism>
    <name type="scientific">Oryctolagus cuniculus</name>
    <name type="common">Rabbit</name>
    <dbReference type="NCBI Taxonomy" id="9986"/>
    <lineage>
        <taxon>Eukaryota</taxon>
        <taxon>Metazoa</taxon>
        <taxon>Chordata</taxon>
        <taxon>Craniata</taxon>
        <taxon>Vertebrata</taxon>
        <taxon>Euteleostomi</taxon>
        <taxon>Mammalia</taxon>
        <taxon>Eutheria</taxon>
        <taxon>Euarchontoglires</taxon>
        <taxon>Glires</taxon>
        <taxon>Lagomorpha</taxon>
        <taxon>Leporidae</taxon>
        <taxon>Oryctolagus</taxon>
    </lineage>
</organism>
<keyword id="KW-0106">Calcium</keyword>
<keyword id="KW-0963">Cytoplasm</keyword>
<keyword id="KW-0597">Phosphoprotein</keyword>
<keyword id="KW-1185">Reference proteome</keyword>
<protein>
    <recommendedName>
        <fullName>Translationally-controlled tumor protein</fullName>
        <shortName>TCTP</shortName>
    </recommendedName>
</protein>
<reference key="1">
    <citation type="submission" date="1994-11" db="EMBL/GenBank/DDBJ databases">
        <title>A rabbit gene encoding a protein homologous to a translationally controlled human tumour protein undergoes developmental regulation during mammary gland development.</title>
        <authorList>
            <person name="Dawson S.P."/>
            <person name="Martin M."/>
            <person name="Tighe P.J."/>
            <person name="Wilde C.J."/>
            <person name="Mayer R.J."/>
        </authorList>
    </citation>
    <scope>NUCLEOTIDE SEQUENCE [MRNA]</scope>
    <source>
        <strain>New Zealand white</strain>
        <tissue>Mammary gland</tissue>
    </source>
</reference>
<reference key="2">
    <citation type="journal article" date="1998" name="Eur. J. Biochem.">
        <title>Structure of the promoter and complete sequence of the gene coding for the rabbit translationally controlled tumor protein (TCTP) P23.</title>
        <authorList>
            <person name="Thiele H."/>
            <person name="Berger M."/>
            <person name="Lenzner C."/>
            <person name="Kuhn H."/>
            <person name="Thiele B.-J."/>
        </authorList>
    </citation>
    <scope>NUCLEOTIDE SEQUENCE [GENOMIC DNA]</scope>
    <source>
        <tissue>Heart</tissue>
    </source>
</reference>
<reference key="3">
    <citation type="journal article" date="2000" name="Eur. J. Biochem.">
        <title>Expression of the gene and processed pseudogenes encoding the human and rabbit translationally controlled tumor protein (TCTP).</title>
        <authorList>
            <person name="Thiele H."/>
            <person name="Berger M."/>
            <person name="Skalweit A."/>
            <person name="Thiele B.-J."/>
        </authorList>
    </citation>
    <scope>NUCLEOTIDE SEQUENCE [MRNA]</scope>
    <scope>VARIANTS</scope>
</reference>
<comment type="function">
    <text evidence="1">Involved in calcium binding and microtubule stabilization (By similarity). Acts as a negative regulator of TSC22D1-mediated apoptosis, via interaction with and destabilization of TSC22D1 protein (By similarity).</text>
</comment>
<comment type="subunit">
    <text evidence="1 2">Homodimer (By similarity). Interacts with STEAP3 (By similarity). Interacts with TSC22D1; interaction results in the destabilization of TSC22D1 protein (By similarity).</text>
</comment>
<comment type="subcellular location">
    <subcellularLocation>
        <location evidence="1">Cytoplasm</location>
    </subcellularLocation>
</comment>
<comment type="developmental stage">
    <text>Undergoes developmental regulation during mammary gland development.</text>
</comment>
<comment type="similarity">
    <text evidence="3">Belongs to the TCTP family.</text>
</comment>
<accession>P43348</accession>
<accession>O77730</accession>
<accession>Q9MYT9</accession>
<gene>
    <name type="primary">TPT1</name>
</gene>
<feature type="chain" id="PRO_0000211271" description="Translationally-controlled tumor protein">
    <location>
        <begin position="1"/>
        <end position="172"/>
    </location>
</feature>
<feature type="domain" description="TCTP" evidence="3">
    <location>
        <begin position="1"/>
        <end position="172"/>
    </location>
</feature>
<feature type="region of interest" description="Required for reduction of TSC22D1 protein stability" evidence="1">
    <location>
        <begin position="70"/>
        <end position="172"/>
    </location>
</feature>
<feature type="modified residue" description="Phosphoserine; by PLK1" evidence="1">
    <location>
        <position position="46"/>
    </location>
</feature>
<feature type="modified residue" description="Phosphoserine" evidence="1">
    <location>
        <position position="53"/>
    </location>
</feature>
<feature type="modified residue" description="Phosphoserine; by PLK1" evidence="1">
    <location>
        <position position="64"/>
    </location>
</feature>
<feature type="sequence variant">
    <original>Q</original>
    <variation>R</variation>
    <location>
        <position position="79"/>
    </location>
</feature>
<feature type="sequence variant">
    <original>E</original>
    <variation>G</variation>
    <location>
        <position position="153"/>
    </location>
</feature>
<feature type="sequence variant">
    <original>M</original>
    <variation>V</variation>
    <location>
        <position position="169"/>
    </location>
</feature>
<feature type="sequence conflict" description="In Ref. 1; CAA86826." evidence="4" ref="1">
    <original>Y</original>
    <variation>D</variation>
    <location>
        <position position="4"/>
    </location>
</feature>
<feature type="sequence conflict" description="In Ref. 1; CAA86826." evidence="4" ref="1">
    <original>M</original>
    <variation>T</variation>
    <location>
        <position position="13"/>
    </location>
</feature>
<feature type="sequence conflict" description="In Ref. 1; CAA86826." evidence="4" ref="1">
    <original>F</original>
    <variation>L</variation>
    <location>
        <position position="129"/>
    </location>
</feature>